<protein>
    <recommendedName>
        <fullName>Signal peptidase complex catalytic subunit SEC11A</fullName>
        <ecNumber evidence="3 4">3.4.21.89</ecNumber>
    </recommendedName>
    <alternativeName>
        <fullName>Endopeptidase SP18</fullName>
    </alternativeName>
    <alternativeName>
        <fullName>Microsomal signal peptidase 18 kDa subunit</fullName>
        <shortName>SPase 18 kDa subunit</shortName>
    </alternativeName>
    <alternativeName>
        <fullName>SEC11 homolog A</fullName>
    </alternativeName>
    <alternativeName>
        <fullName>SEC11-like protein 1</fullName>
    </alternativeName>
    <alternativeName>
        <fullName>SPC18</fullName>
    </alternativeName>
</protein>
<name>SC11A_CANLF</name>
<proteinExistence type="evidence at protein level"/>
<comment type="function">
    <text evidence="1 3 4 5">Catalytic component of the signal peptidase complex (SPC) which catalyzes the cleavage of N-terminal signal sequences from nascent proteins as they are translocated into the lumen of the endoplasmic reticulum (PubMed:14559916, PubMed:3511473, PubMed:8444896). Specifically cleaves N-terminal signal peptides that contain a hydrophobic alpha-helix (h-region) shorter than 18-20 amino acids (By similarity).</text>
</comment>
<comment type="catalytic activity">
    <reaction evidence="3 4">
        <text>Cleavage of hydrophobic, N-terminal signal or leader sequences from secreted and periplasmic proteins.</text>
        <dbReference type="EC" id="3.4.21.89"/>
    </reaction>
</comment>
<comment type="subunit">
    <text evidence="1 4">Component of the signal peptidase complex paralog A (SPC-A) composed of a catalytic subunit SEC11A and three accessory subunits SPCS1, SPCS2 and SPCS3 (PubMed:3511473). Within the complex, interacts with SPCS2 and SPCS3 (By similarity). The complex induces a local thinning of the ER membrane which is used to measure the length of the signal peptide (SP) h-region of protein substrates (By similarity). This ensures the selectivity of the complex towards h-regions shorter than 18-20 amino acids (By similarity).</text>
</comment>
<comment type="subcellular location">
    <subcellularLocation>
        <location evidence="4 5">Endoplasmic reticulum membrane</location>
        <topology evidence="5">Single-pass type II membrane protein</topology>
    </subcellularLocation>
</comment>
<comment type="domain">
    <text evidence="1">The C-terminal short (CTS) helix is essential for catalytic activity (By similarity). It may be accommodated as a transmembrane helix in the thinned membrane environment of the complex, similarly to the signal peptide in the complex substrates (By similarity).</text>
</comment>
<comment type="similarity">
    <text evidence="6">Belongs to the peptidase S26B family.</text>
</comment>
<keyword id="KW-0903">Direct protein sequencing</keyword>
<keyword id="KW-0256">Endoplasmic reticulum</keyword>
<keyword id="KW-0378">Hydrolase</keyword>
<keyword id="KW-0472">Membrane</keyword>
<keyword id="KW-0645">Protease</keyword>
<keyword id="KW-1185">Reference proteome</keyword>
<keyword id="KW-0735">Signal-anchor</keyword>
<keyword id="KW-0812">Transmembrane</keyword>
<keyword id="KW-1133">Transmembrane helix</keyword>
<reference key="1">
    <citation type="journal article" date="1990" name="J. Biol. Chem.">
        <title>Two subunits of the canine signal peptidase complex are homologous to yeast SEC11 protein.</title>
        <authorList>
            <person name="Shelness G.S."/>
            <person name="Blobel G."/>
        </authorList>
    </citation>
    <scope>NUCLEOTIDE SEQUENCE [MRNA]</scope>
    <scope>PROTEIN SEQUENCE OF 1-34</scope>
    <source>
        <tissue>Liver</tissue>
    </source>
</reference>
<reference key="2">
    <citation type="journal article" date="1986" name="Proc. Natl. Acad. Sci. U.S.A.">
        <title>Purification of microsomal signal peptidase as a complex.</title>
        <authorList>
            <person name="Evans E.A."/>
            <person name="Gilmore R."/>
            <person name="Blobel G."/>
        </authorList>
    </citation>
    <scope>FUNCTION</scope>
    <scope>CATALYTIC ACTIVITY</scope>
    <scope>IDENTIFICATION IN THE SIGNAL PEPTIDASE COMPLEX</scope>
    <scope>SUBCELLULAR LOCATION</scope>
</reference>
<reference key="3">
    <citation type="journal article" date="1993" name="J. Biol. Chem.">
        <title>Membrane topology and biogenesis of eukaryotic signal peptidase.</title>
        <authorList>
            <person name="Shelness G.S."/>
            <person name="Lin L."/>
            <person name="Nicchitta C.V."/>
        </authorList>
    </citation>
    <scope>FUNCTION</scope>
    <scope>SUBCELLULAR LOCATION</scope>
    <scope>TOPOLOGY</scope>
</reference>
<reference key="4">
    <citation type="journal article" date="2003" name="J. Biol. Chem.">
        <title>Genetic complementation in yeast reveals functional similarities between the catalytic subunits of mammalian signal peptidase complex.</title>
        <authorList>
            <person name="Liang H."/>
            <person name="VanValkenburgh C."/>
            <person name="Chen X."/>
            <person name="Mullins C."/>
            <person name="Van Kaer L."/>
            <person name="Green N."/>
            <person name="Fang H."/>
        </authorList>
    </citation>
    <scope>FUNCTION</scope>
    <scope>CATALYTIC ACTIVITY</scope>
</reference>
<sequence>MLSLDFLDDVRRMNKRQLYYQVLNFGMIVSSALMIWKGLMVITGSESPIVVVLSGSMEPAFHRGDLLFLTNRVEDPIRVGEIVVFRIEGREIPIVHRVLKIHEKQNGHIKFLTKGDNNAVDDRGLYKQGQHWLEKKDVVGRARGFVPYIGIVTILMNDYPKFKYAVLFLLGLFVLVHRE</sequence>
<feature type="chain" id="PRO_0000109542" description="Signal peptidase complex catalytic subunit SEC11A">
    <location>
        <begin position="1"/>
        <end position="179"/>
    </location>
</feature>
<feature type="topological domain" description="Cytoplasmic" evidence="5">
    <location>
        <begin position="1"/>
        <end position="16"/>
    </location>
</feature>
<feature type="transmembrane region" description="Helical; Signal-anchor for type II membrane protein" evidence="2">
    <location>
        <begin position="17"/>
        <end position="36"/>
    </location>
</feature>
<feature type="topological domain" description="Lumenal" evidence="5">
    <location>
        <begin position="37"/>
        <end position="179"/>
    </location>
</feature>
<feature type="region of interest" description="C-terminal short (CTS) helix" evidence="1">
    <location>
        <begin position="165"/>
        <end position="176"/>
    </location>
</feature>
<feature type="active site" description="Charge relay system" evidence="1">
    <location>
        <position position="56"/>
    </location>
</feature>
<feature type="active site" description="Charge relay system" evidence="1">
    <location>
        <position position="96"/>
    </location>
</feature>
<feature type="active site" description="Charge relay system" evidence="1">
    <location>
        <position position="122"/>
    </location>
</feature>
<evidence type="ECO:0000250" key="1">
    <source>
        <dbReference type="UniProtKB" id="P67812"/>
    </source>
</evidence>
<evidence type="ECO:0000255" key="2"/>
<evidence type="ECO:0000269" key="3">
    <source>
    </source>
</evidence>
<evidence type="ECO:0000269" key="4">
    <source>
    </source>
</evidence>
<evidence type="ECO:0000269" key="5">
    <source>
    </source>
</evidence>
<evidence type="ECO:0000305" key="6"/>
<organism>
    <name type="scientific">Canis lupus familiaris</name>
    <name type="common">Dog</name>
    <name type="synonym">Canis familiaris</name>
    <dbReference type="NCBI Taxonomy" id="9615"/>
    <lineage>
        <taxon>Eukaryota</taxon>
        <taxon>Metazoa</taxon>
        <taxon>Chordata</taxon>
        <taxon>Craniata</taxon>
        <taxon>Vertebrata</taxon>
        <taxon>Euteleostomi</taxon>
        <taxon>Mammalia</taxon>
        <taxon>Eutheria</taxon>
        <taxon>Laurasiatheria</taxon>
        <taxon>Carnivora</taxon>
        <taxon>Caniformia</taxon>
        <taxon>Canidae</taxon>
        <taxon>Canis</taxon>
    </lineage>
</organism>
<accession>P67811</accession>
<accession>O75957</accession>
<accession>P21378</accession>
<gene>
    <name type="primary">SEC11A</name>
    <name type="synonym">SEC11L1</name>
    <name type="synonym">SPC18</name>
</gene>
<dbReference type="EC" id="3.4.21.89" evidence="3 4"/>
<dbReference type="EMBL" id="J05466">
    <property type="protein sequence ID" value="AAA30895.1"/>
    <property type="molecule type" value="mRNA"/>
</dbReference>
<dbReference type="PIR" id="A35309">
    <property type="entry name" value="A35309"/>
</dbReference>
<dbReference type="RefSeq" id="NP_001003313.1">
    <property type="nucleotide sequence ID" value="NM_001003313.1"/>
</dbReference>
<dbReference type="SMR" id="P67811"/>
<dbReference type="CORUM" id="P67811"/>
<dbReference type="FunCoup" id="P67811">
    <property type="interactions" value="1971"/>
</dbReference>
<dbReference type="STRING" id="9615.ENSCAFP00000051306"/>
<dbReference type="MEROPS" id="S26.009"/>
<dbReference type="PaxDb" id="9612-ENSCAFP00000018993"/>
<dbReference type="Ensembl" id="ENSCAFT00000092290.2">
    <property type="protein sequence ID" value="ENSCAFP00000051306.2"/>
    <property type="gene ID" value="ENSCAFG00000012889.5"/>
</dbReference>
<dbReference type="Ensembl" id="ENSCAFT00030002465.1">
    <property type="protein sequence ID" value="ENSCAFP00030002195.1"/>
    <property type="gene ID" value="ENSCAFG00030001355.1"/>
</dbReference>
<dbReference type="Ensembl" id="ENSCAFT00040006188.1">
    <property type="protein sequence ID" value="ENSCAFP00040005348.1"/>
    <property type="gene ID" value="ENSCAFG00040003253.1"/>
</dbReference>
<dbReference type="Ensembl" id="ENSCAFT00845005172.1">
    <property type="protein sequence ID" value="ENSCAFP00845004107.1"/>
    <property type="gene ID" value="ENSCAFG00845002905.1"/>
</dbReference>
<dbReference type="GeneID" id="404004"/>
<dbReference type="KEGG" id="cfa:404004"/>
<dbReference type="CTD" id="23478"/>
<dbReference type="VEuPathDB" id="HostDB:ENSCAFG00845002905"/>
<dbReference type="VGNC" id="VGNC:53239">
    <property type="gene designation" value="SEC11A"/>
</dbReference>
<dbReference type="eggNOG" id="KOG3342">
    <property type="taxonomic scope" value="Eukaryota"/>
</dbReference>
<dbReference type="GeneTree" id="ENSGT00390000015600"/>
<dbReference type="HOGENOM" id="CLU_089996_0_0_1"/>
<dbReference type="InParanoid" id="P67811"/>
<dbReference type="OMA" id="ILMNEYP"/>
<dbReference type="OrthoDB" id="10257561at2759"/>
<dbReference type="TreeFam" id="TF313648"/>
<dbReference type="Reactome" id="R-CFA-422085">
    <property type="pathway name" value="Synthesis, secretion, and deacylation of Ghrelin"/>
</dbReference>
<dbReference type="Proteomes" id="UP000002254">
    <property type="component" value="Chromosome 3"/>
</dbReference>
<dbReference type="Proteomes" id="UP000694429">
    <property type="component" value="Chromosome 3"/>
</dbReference>
<dbReference type="Proteomes" id="UP000694542">
    <property type="component" value="Chromosome 3"/>
</dbReference>
<dbReference type="Proteomes" id="UP000805418">
    <property type="component" value="Chromosome 3"/>
</dbReference>
<dbReference type="Bgee" id="ENSCAFG00000012889">
    <property type="expression patterns" value="Expressed in lymph node and 49 other cell types or tissues"/>
</dbReference>
<dbReference type="GO" id="GO:0005789">
    <property type="term" value="C:endoplasmic reticulum membrane"/>
    <property type="evidence" value="ECO:0000304"/>
    <property type="project" value="Reactome"/>
</dbReference>
<dbReference type="GO" id="GO:0005787">
    <property type="term" value="C:signal peptidase complex"/>
    <property type="evidence" value="ECO:0000314"/>
    <property type="project" value="UniProtKB"/>
</dbReference>
<dbReference type="GO" id="GO:0008233">
    <property type="term" value="F:peptidase activity"/>
    <property type="evidence" value="ECO:0000318"/>
    <property type="project" value="GO_Central"/>
</dbReference>
<dbReference type="GO" id="GO:0004252">
    <property type="term" value="F:serine-type endopeptidase activity"/>
    <property type="evidence" value="ECO:0000250"/>
    <property type="project" value="UniProtKB"/>
</dbReference>
<dbReference type="GO" id="GO:0006465">
    <property type="term" value="P:signal peptide processing"/>
    <property type="evidence" value="ECO:0000250"/>
    <property type="project" value="UniProtKB"/>
</dbReference>
<dbReference type="CDD" id="cd06530">
    <property type="entry name" value="S26_SPase_I"/>
    <property type="match status" value="1"/>
</dbReference>
<dbReference type="FunFam" id="2.10.109.10:FF:000003">
    <property type="entry name" value="Signal peptidase complex catalytic subunit SEC11"/>
    <property type="match status" value="1"/>
</dbReference>
<dbReference type="Gene3D" id="2.10.109.10">
    <property type="entry name" value="Umud Fragment, subunit A"/>
    <property type="match status" value="1"/>
</dbReference>
<dbReference type="InterPro" id="IPR036286">
    <property type="entry name" value="LexA/Signal_pep-like_sf"/>
</dbReference>
<dbReference type="InterPro" id="IPR019758">
    <property type="entry name" value="Pept_S26A_signal_pept_1_CS"/>
</dbReference>
<dbReference type="InterPro" id="IPR019756">
    <property type="entry name" value="Pept_S26A_signal_pept_1_Ser-AS"/>
</dbReference>
<dbReference type="InterPro" id="IPR015927">
    <property type="entry name" value="Peptidase_S24_S26A/B/C"/>
</dbReference>
<dbReference type="InterPro" id="IPR019533">
    <property type="entry name" value="Peptidase_S26"/>
</dbReference>
<dbReference type="InterPro" id="IPR001733">
    <property type="entry name" value="Peptidase_S26B"/>
</dbReference>
<dbReference type="NCBIfam" id="TIGR02228">
    <property type="entry name" value="sigpep_I_arch"/>
    <property type="match status" value="1"/>
</dbReference>
<dbReference type="PANTHER" id="PTHR10806">
    <property type="entry name" value="SIGNAL PEPTIDASE COMPLEX CATALYTIC SUBUNIT SEC11"/>
    <property type="match status" value="1"/>
</dbReference>
<dbReference type="PANTHER" id="PTHR10806:SF28">
    <property type="entry name" value="SIGNAL PEPTIDASE COMPLEX CATALYTIC SUBUNIT SEC11B-RELATED"/>
    <property type="match status" value="1"/>
</dbReference>
<dbReference type="Pfam" id="PF00717">
    <property type="entry name" value="Peptidase_S24"/>
    <property type="match status" value="1"/>
</dbReference>
<dbReference type="PRINTS" id="PR00728">
    <property type="entry name" value="SIGNALPTASE"/>
</dbReference>
<dbReference type="SUPFAM" id="SSF51306">
    <property type="entry name" value="LexA/Signal peptidase"/>
    <property type="match status" value="1"/>
</dbReference>
<dbReference type="PROSITE" id="PS00501">
    <property type="entry name" value="SPASE_I_1"/>
    <property type="match status" value="1"/>
</dbReference>
<dbReference type="PROSITE" id="PS00761">
    <property type="entry name" value="SPASE_I_3"/>
    <property type="match status" value="1"/>
</dbReference>